<sequence length="642" mass="72329">MMPFAVTTQGAQQPAPAPKQFGISSPISLAAPKDTDRELTQKLIETLQPFGVFEEEEELQRRILILQKLNNLVKEWIREISESRNLPQAVIENVGGKIFTFGSYRLGVHTKGADIDALCVAPRHVDRNDFFTSFYDKLKLQEEVKDLRAVEEAFVPVIKLCFDGIEIDILFARLALQTIPEDLDLRDDSLLKNLDIRCIRSLNGCRVTDEILHLVPNIDSFRLTLRAIKLWAKCHNIYSNILGFLGGVSWAMLVARTCQLYPNAIASTLVRKFFLVFSEWEWPNPVLLKEPEERNLNLPVWDPRVNPSDRYHLMPIITPAYPQQNSTYNVSVSTRMVMIEEFKQGLAITHEILLNKAEWSKLFEAPSFFQKYKHYIVLLASAPTEKQHLEWVGLVESKIRILVGSLEKNEFITLAHVNPQSFPAPKETADKEEFRTMWVIGLVLKKPENSEILSIDLTYDIQSFTDTVYRQAINSKMFEMDMKIAAMHLRRKELHQLLPNHVLQKKETHLTESVRLTAVTDSSLLLSIDSENSMTAPSPTGTMKTGPLTGNPQGRNSPALAVMAASVTNIQFPDVSLQHVNPIESSGIALSESIPQIPSQPTISPPPKPTMTRVVSSTHLVNHPSRPSGNTATNIPNPILGV</sequence>
<proteinExistence type="evidence at protein level"/>
<organism>
    <name type="scientific">Mus musculus</name>
    <name type="common">Mouse</name>
    <dbReference type="NCBI Taxonomy" id="10090"/>
    <lineage>
        <taxon>Eukaryota</taxon>
        <taxon>Metazoa</taxon>
        <taxon>Chordata</taxon>
        <taxon>Craniata</taxon>
        <taxon>Vertebrata</taxon>
        <taxon>Euteleostomi</taxon>
        <taxon>Mammalia</taxon>
        <taxon>Eutheria</taxon>
        <taxon>Euarchontoglires</taxon>
        <taxon>Glires</taxon>
        <taxon>Rodentia</taxon>
        <taxon>Myomorpha</taxon>
        <taxon>Muroidea</taxon>
        <taxon>Muridae</taxon>
        <taxon>Murinae</taxon>
        <taxon>Mus</taxon>
        <taxon>Mus</taxon>
    </lineage>
</organism>
<reference key="1">
    <citation type="journal article" date="2000" name="FEBS Lett.">
        <title>An intronless gene encoding a poly(A) polymerase is specifically expressed in testis.</title>
        <authorList>
            <person name="Lee Y.J."/>
            <person name="Lee Y."/>
            <person name="Chung J.H."/>
        </authorList>
    </citation>
    <scope>NUCLEOTIDE SEQUENCE [MRNA]</scope>
    <scope>SUBCELLULAR LOCATION</scope>
    <scope>TISSUE SPECIFICITY</scope>
    <scope>DEVELOPMENTAL STAGE</scope>
    <source>
        <strain>BALB/cJ</strain>
        <tissue>Testis</tissue>
    </source>
</reference>
<reference key="2">
    <citation type="journal article" date="2000" name="Dev. Biol.">
        <title>Identification of a novel isoform of poly(A) polymerase, TPAP, specifically present in the cytoplasm of spermatogenic cells.</title>
        <authorList>
            <person name="Kashiwabara S."/>
            <person name="Zhuang T."/>
            <person name="Yamagata K."/>
            <person name="Noguchi J."/>
            <person name="Fukamizu A."/>
            <person name="Baba T."/>
        </authorList>
    </citation>
    <scope>NUCLEOTIDE SEQUENCE [MRNA]</scope>
    <scope>SUBCELLULAR LOCATION</scope>
    <source>
        <strain>ddY</strain>
        <tissue>Testis</tissue>
    </source>
</reference>
<reference key="3">
    <citation type="journal article" date="2008" name="FEBS Lett.">
        <title>Germ cell-specific gene 1 targets testis-specific poly(A) polymerase to the endoplasmic reticulum through protein-protein interactions.</title>
        <authorList>
            <person name="Choi H.-S."/>
            <person name="Lee S.-H."/>
            <person name="Kim H."/>
            <person name="Lee Y."/>
        </authorList>
    </citation>
    <scope>INTERACTION WITH GSG1</scope>
</reference>
<reference key="4">
    <citation type="journal article" date="2010" name="Cell">
        <title>A tissue-specific atlas of mouse protein phosphorylation and expression.</title>
        <authorList>
            <person name="Huttlin E.L."/>
            <person name="Jedrychowski M.P."/>
            <person name="Elias J.E."/>
            <person name="Goswami T."/>
            <person name="Rad R."/>
            <person name="Beausoleil S.A."/>
            <person name="Villen J."/>
            <person name="Haas W."/>
            <person name="Sowa M.E."/>
            <person name="Gygi S.P."/>
        </authorList>
    </citation>
    <scope>IDENTIFICATION BY MASS SPECTROMETRY [LARGE SCALE ANALYSIS]</scope>
    <source>
        <tissue>Testis</tissue>
    </source>
</reference>
<feature type="chain" id="PRO_0000051623" description="Poly(A) polymerase beta">
    <location>
        <begin position="1"/>
        <end position="642"/>
    </location>
</feature>
<feature type="region of interest" description="Disordered" evidence="2">
    <location>
        <begin position="530"/>
        <end position="553"/>
    </location>
</feature>
<feature type="region of interest" description="Disordered" evidence="2">
    <location>
        <begin position="620"/>
        <end position="642"/>
    </location>
</feature>
<feature type="compositionally biased region" description="Polar residues" evidence="2">
    <location>
        <begin position="620"/>
        <end position="636"/>
    </location>
</feature>
<feature type="binding site" evidence="1">
    <location>
        <begin position="101"/>
        <end position="103"/>
    </location>
    <ligand>
        <name>ATP</name>
        <dbReference type="ChEBI" id="CHEBI:30616"/>
    </ligand>
</feature>
<feature type="binding site" evidence="1">
    <location>
        <position position="110"/>
    </location>
    <ligand>
        <name>ATP</name>
        <dbReference type="ChEBI" id="CHEBI:30616"/>
    </ligand>
</feature>
<feature type="binding site" evidence="1">
    <location>
        <begin position="114"/>
        <end position="116"/>
    </location>
    <ligand>
        <name>ATP</name>
        <dbReference type="ChEBI" id="CHEBI:30616"/>
    </ligand>
</feature>
<feature type="binding site" evidence="1">
    <location>
        <position position="114"/>
    </location>
    <ligand>
        <name>Mg(2+)</name>
        <dbReference type="ChEBI" id="CHEBI:18420"/>
        <label>1</label>
        <note>catalytic</note>
    </ligand>
</feature>
<feature type="binding site" evidence="1">
    <location>
        <position position="114"/>
    </location>
    <ligand>
        <name>Mg(2+)</name>
        <dbReference type="ChEBI" id="CHEBI:18420"/>
        <label>2</label>
        <note>catalytic</note>
    </ligand>
</feature>
<feature type="binding site" evidence="1">
    <location>
        <position position="116"/>
    </location>
    <ligand>
        <name>Mg(2+)</name>
        <dbReference type="ChEBI" id="CHEBI:18420"/>
        <label>1</label>
        <note>catalytic</note>
    </ligand>
</feature>
<feature type="binding site" evidence="1">
    <location>
        <position position="116"/>
    </location>
    <ligand>
        <name>Mg(2+)</name>
        <dbReference type="ChEBI" id="CHEBI:18420"/>
        <label>2</label>
        <note>catalytic</note>
    </ligand>
</feature>
<feature type="binding site" evidence="1">
    <location>
        <position position="168"/>
    </location>
    <ligand>
        <name>ATP</name>
        <dbReference type="ChEBI" id="CHEBI:30616"/>
    </ligand>
</feature>
<feature type="binding site" evidence="1">
    <location>
        <position position="168"/>
    </location>
    <ligand>
        <name>Mg(2+)</name>
        <dbReference type="ChEBI" id="CHEBI:18420"/>
        <label>2</label>
        <note>catalytic</note>
    </ligand>
</feature>
<feature type="binding site" evidence="1">
    <location>
        <position position="229"/>
    </location>
    <ligand>
        <name>ATP</name>
        <dbReference type="ChEBI" id="CHEBI:30616"/>
    </ligand>
</feature>
<feature type="binding site" evidence="1">
    <location>
        <position position="238"/>
    </location>
    <ligand>
        <name>ATP</name>
        <dbReference type="ChEBI" id="CHEBI:30616"/>
    </ligand>
</feature>
<feature type="binding site" evidence="1">
    <location>
        <begin position="247"/>
        <end position="248"/>
    </location>
    <ligand>
        <name>ATP</name>
        <dbReference type="ChEBI" id="CHEBI:30616"/>
    </ligand>
</feature>
<feature type="site" description="Interaction with RNA" evidence="1">
    <location>
        <position position="154"/>
    </location>
</feature>
<feature type="site" description="Interaction with RNA" evidence="1">
    <location>
        <position position="159"/>
    </location>
</feature>
<feature type="site" description="Interaction with RNA" evidence="1">
    <location>
        <position position="329"/>
    </location>
</feature>
<feature type="site" description="Interaction with RNA" evidence="1">
    <location>
        <position position="400"/>
    </location>
</feature>
<feature type="sequence conflict" description="In Ref. 1; AAD43624." evidence="5" ref="1">
    <original>L</original>
    <variation>F</variation>
    <location>
        <position position="202"/>
    </location>
</feature>
<gene>
    <name evidence="6" type="primary">Papolb</name>
    <name type="synonym">Papt</name>
    <name type="synonym">Tpap</name>
</gene>
<keyword id="KW-0067">ATP-binding</keyword>
<keyword id="KW-0963">Cytoplasm</keyword>
<keyword id="KW-0460">Magnesium</keyword>
<keyword id="KW-0464">Manganese</keyword>
<keyword id="KW-0479">Metal-binding</keyword>
<keyword id="KW-0507">mRNA processing</keyword>
<keyword id="KW-0547">Nucleotide-binding</keyword>
<keyword id="KW-0539">Nucleus</keyword>
<keyword id="KW-1185">Reference proteome</keyword>
<keyword id="KW-0694">RNA-binding</keyword>
<keyword id="KW-0808">Transferase</keyword>
<accession>Q9WVP6</accession>
<accession>Q9R1R3</accession>
<dbReference type="EC" id="2.7.7.19"/>
<dbReference type="EMBL" id="AF039957">
    <property type="protein sequence ID" value="AAD43624.1"/>
    <property type="status" value="ALT_INIT"/>
    <property type="molecule type" value="mRNA"/>
</dbReference>
<dbReference type="EMBL" id="AB030729">
    <property type="protein sequence ID" value="BAA83086.1"/>
    <property type="molecule type" value="mRNA"/>
</dbReference>
<dbReference type="CCDS" id="CCDS39362.1"/>
<dbReference type="RefSeq" id="NP_064327.1">
    <property type="nucleotide sequence ID" value="NM_019943.2"/>
</dbReference>
<dbReference type="SMR" id="Q9WVP6"/>
<dbReference type="BioGRID" id="208033">
    <property type="interactions" value="2"/>
</dbReference>
<dbReference type="FunCoup" id="Q9WVP6">
    <property type="interactions" value="1704"/>
</dbReference>
<dbReference type="IntAct" id="Q9WVP6">
    <property type="interactions" value="4"/>
</dbReference>
<dbReference type="MINT" id="Q9WVP6"/>
<dbReference type="STRING" id="10090.ENSMUSP00000100595"/>
<dbReference type="iPTMnet" id="Q9WVP6"/>
<dbReference type="PhosphoSitePlus" id="Q9WVP6"/>
<dbReference type="PaxDb" id="10090-ENSMUSP00000100595"/>
<dbReference type="ProteomicsDB" id="288057"/>
<dbReference type="Ensembl" id="ENSMUST00000099400.3">
    <property type="protein sequence ID" value="ENSMUSP00000100595.2"/>
    <property type="gene ID" value="ENSMUSG00000074817.3"/>
</dbReference>
<dbReference type="GeneID" id="56522"/>
<dbReference type="KEGG" id="mmu:56522"/>
<dbReference type="AGR" id="MGI:1932115"/>
<dbReference type="CTD" id="56903"/>
<dbReference type="MGI" id="MGI:1932115">
    <property type="gene designation" value="Papolb"/>
</dbReference>
<dbReference type="eggNOG" id="KOG2245">
    <property type="taxonomic scope" value="Eukaryota"/>
</dbReference>
<dbReference type="GeneTree" id="ENSGT00940000164307"/>
<dbReference type="InParanoid" id="Q9WVP6"/>
<dbReference type="OMA" id="EWKWPQP"/>
<dbReference type="OrthoDB" id="412748at2759"/>
<dbReference type="BRENDA" id="2.7.7.19">
    <property type="organism ID" value="3474"/>
</dbReference>
<dbReference type="BioGRID-ORCS" id="56522">
    <property type="hits" value="1 hit in 78 CRISPR screens"/>
</dbReference>
<dbReference type="PRO" id="PR:Q9WVP6"/>
<dbReference type="Proteomes" id="UP000000589">
    <property type="component" value="Chromosome 5"/>
</dbReference>
<dbReference type="RNAct" id="Q9WVP6">
    <property type="molecule type" value="protein"/>
</dbReference>
<dbReference type="GO" id="GO:0005737">
    <property type="term" value="C:cytoplasm"/>
    <property type="evidence" value="ECO:0000314"/>
    <property type="project" value="MGI"/>
</dbReference>
<dbReference type="GO" id="GO:0005783">
    <property type="term" value="C:endoplasmic reticulum"/>
    <property type="evidence" value="ECO:0000353"/>
    <property type="project" value="MGI"/>
</dbReference>
<dbReference type="GO" id="GO:0005634">
    <property type="term" value="C:nucleus"/>
    <property type="evidence" value="ECO:0000314"/>
    <property type="project" value="MGI"/>
</dbReference>
<dbReference type="GO" id="GO:0005524">
    <property type="term" value="F:ATP binding"/>
    <property type="evidence" value="ECO:0007669"/>
    <property type="project" value="UniProtKB-KW"/>
</dbReference>
<dbReference type="GO" id="GO:0046872">
    <property type="term" value="F:metal ion binding"/>
    <property type="evidence" value="ECO:0007669"/>
    <property type="project" value="UniProtKB-KW"/>
</dbReference>
<dbReference type="GO" id="GO:1990817">
    <property type="term" value="F:poly(A) RNA polymerase activity"/>
    <property type="evidence" value="ECO:0000247"/>
    <property type="project" value="MGI"/>
</dbReference>
<dbReference type="GO" id="GO:0003723">
    <property type="term" value="F:RNA binding"/>
    <property type="evidence" value="ECO:0007669"/>
    <property type="project" value="UniProtKB-KW"/>
</dbReference>
<dbReference type="GO" id="GO:0006397">
    <property type="term" value="P:mRNA processing"/>
    <property type="evidence" value="ECO:0007669"/>
    <property type="project" value="UniProtKB-KW"/>
</dbReference>
<dbReference type="GO" id="GO:0031123">
    <property type="term" value="P:RNA 3'-end processing"/>
    <property type="evidence" value="ECO:0007669"/>
    <property type="project" value="InterPro"/>
</dbReference>
<dbReference type="CDD" id="cd05402">
    <property type="entry name" value="NT_PAP_TUTase"/>
    <property type="match status" value="1"/>
</dbReference>
<dbReference type="FunFam" id="3.30.460.10:FF:000002">
    <property type="entry name" value="Poly(A) polymerase alpha, putative"/>
    <property type="match status" value="1"/>
</dbReference>
<dbReference type="FunFam" id="1.10.1410.10:FF:000001">
    <property type="entry name" value="Putative poly(A) polymerase gamma"/>
    <property type="match status" value="1"/>
</dbReference>
<dbReference type="FunFam" id="3.30.70.590:FF:000001">
    <property type="entry name" value="Putative poly(A) polymerase gamma"/>
    <property type="match status" value="1"/>
</dbReference>
<dbReference type="Gene3D" id="1.10.1410.10">
    <property type="match status" value="1"/>
</dbReference>
<dbReference type="Gene3D" id="3.30.460.10">
    <property type="entry name" value="Beta Polymerase, domain 2"/>
    <property type="match status" value="1"/>
</dbReference>
<dbReference type="Gene3D" id="3.30.70.590">
    <property type="entry name" value="Poly(A) polymerase predicted RNA binding domain"/>
    <property type="match status" value="1"/>
</dbReference>
<dbReference type="InterPro" id="IPR043519">
    <property type="entry name" value="NT_sf"/>
</dbReference>
<dbReference type="InterPro" id="IPR011068">
    <property type="entry name" value="NuclTrfase_I-like_C"/>
</dbReference>
<dbReference type="InterPro" id="IPR007012">
    <property type="entry name" value="PolA_pol_cen_dom"/>
</dbReference>
<dbReference type="InterPro" id="IPR048840">
    <property type="entry name" value="PolA_pol_NTPase"/>
</dbReference>
<dbReference type="InterPro" id="IPR007010">
    <property type="entry name" value="PolA_pol_RNA-bd_dom"/>
</dbReference>
<dbReference type="PANTHER" id="PTHR10682">
    <property type="entry name" value="POLY A POLYMERASE"/>
    <property type="match status" value="1"/>
</dbReference>
<dbReference type="PANTHER" id="PTHR10682:SF19">
    <property type="entry name" value="POLY(A) POLYMERASE BETA"/>
    <property type="match status" value="1"/>
</dbReference>
<dbReference type="Pfam" id="PF04928">
    <property type="entry name" value="PAP_central"/>
    <property type="match status" value="1"/>
</dbReference>
<dbReference type="Pfam" id="PF20750">
    <property type="entry name" value="PAP_NTPase"/>
    <property type="match status" value="1"/>
</dbReference>
<dbReference type="Pfam" id="PF04926">
    <property type="entry name" value="PAP_RNA-bind"/>
    <property type="match status" value="2"/>
</dbReference>
<dbReference type="SUPFAM" id="SSF81301">
    <property type="entry name" value="Nucleotidyltransferase"/>
    <property type="match status" value="1"/>
</dbReference>
<dbReference type="SUPFAM" id="SSF55003">
    <property type="entry name" value="PAP/Archaeal CCA-adding enzyme, C-terminal domain"/>
    <property type="match status" value="1"/>
</dbReference>
<dbReference type="SUPFAM" id="SSF81631">
    <property type="entry name" value="PAP/OAS1 substrate-binding domain"/>
    <property type="match status" value="1"/>
</dbReference>
<protein>
    <recommendedName>
        <fullName evidence="5">Poly(A) polymerase beta</fullName>
        <shortName>PAP-beta</shortName>
        <ecNumber>2.7.7.19</ecNumber>
    </recommendedName>
    <alternativeName>
        <fullName>Polynucleotide adenylyltransferase beta</fullName>
    </alternativeName>
    <alternativeName>
        <fullName>Testis-specific poly(A) polymerase</fullName>
    </alternativeName>
</protein>
<comment type="catalytic activity">
    <reaction>
        <text>RNA(n) + ATP = RNA(n)-3'-adenine ribonucleotide + diphosphate</text>
        <dbReference type="Rhea" id="RHEA:11332"/>
        <dbReference type="Rhea" id="RHEA-COMP:14527"/>
        <dbReference type="Rhea" id="RHEA-COMP:17347"/>
        <dbReference type="ChEBI" id="CHEBI:30616"/>
        <dbReference type="ChEBI" id="CHEBI:33019"/>
        <dbReference type="ChEBI" id="CHEBI:140395"/>
        <dbReference type="ChEBI" id="CHEBI:173115"/>
        <dbReference type="EC" id="2.7.7.19"/>
    </reaction>
</comment>
<comment type="cofactor">
    <cofactor evidence="1">
        <name>Mg(2+)</name>
        <dbReference type="ChEBI" id="CHEBI:18420"/>
    </cofactor>
    <cofactor evidence="1">
        <name>Mn(2+)</name>
        <dbReference type="ChEBI" id="CHEBI:29035"/>
    </cofactor>
    <text evidence="1">Binds 2 magnesium ions. Also active with manganese.</text>
</comment>
<comment type="subunit">
    <text evidence="4">Interacts with GSG1.</text>
</comment>
<comment type="interaction">
    <interactant intactId="EBI-7842113">
        <id>Q9WVP6</id>
    </interactant>
    <interactant intactId="EBI-7842142">
        <id>Q8R1W2</id>
        <label>Gsg1</label>
    </interactant>
    <organismsDiffer>false</organismsDiffer>
    <experiments>8</experiments>
</comment>
<comment type="subcellular location">
    <subcellularLocation>
        <location>Cytoplasm</location>
    </subcellularLocation>
    <subcellularLocation>
        <location>Nucleus</location>
    </subcellularLocation>
</comment>
<comment type="tissue specificity">
    <text evidence="3">Testis specific.</text>
</comment>
<comment type="developmental stage">
    <text evidence="3">Expressed at low levels in 2-week-old mice. Abundantly expressed in 4-week-old and 6-week-old animals.</text>
</comment>
<comment type="similarity">
    <text evidence="5">Belongs to the poly(A) polymerase family.</text>
</comment>
<comment type="sequence caution" evidence="5">
    <conflict type="erroneous initiation">
        <sequence resource="EMBL-CDS" id="AAD43624"/>
    </conflict>
    <text>Truncated N-terminus.</text>
</comment>
<evidence type="ECO:0000250" key="1"/>
<evidence type="ECO:0000256" key="2">
    <source>
        <dbReference type="SAM" id="MobiDB-lite"/>
    </source>
</evidence>
<evidence type="ECO:0000269" key="3">
    <source>
    </source>
</evidence>
<evidence type="ECO:0000269" key="4">
    <source>
    </source>
</evidence>
<evidence type="ECO:0000305" key="5"/>
<evidence type="ECO:0000312" key="6">
    <source>
        <dbReference type="MGI" id="MGI:1932115"/>
    </source>
</evidence>
<name>PAPOB_MOUSE</name>